<evidence type="ECO:0000255" key="1"/>
<evidence type="ECO:0000269" key="2">
    <source>
    </source>
</evidence>
<evidence type="ECO:0000303" key="3">
    <source>
    </source>
</evidence>
<evidence type="ECO:0000305" key="4"/>
<evidence type="ECO:0000305" key="5">
    <source>
    </source>
</evidence>
<reference evidence="4" key="1">
    <citation type="journal article" date="2012" name="J. Proteomics">
        <title>Antimicrobial peptides from the skin of the Asian frog, Odorrana jingdongensis: De novo sequencing and analysis of tandem mass spectrometry data.</title>
        <authorList>
            <person name="Liu J."/>
            <person name="Jiang J."/>
            <person name="Wu Z."/>
            <person name="Xie F."/>
        </authorList>
    </citation>
    <scope>PROTEIN SEQUENCE</scope>
    <scope>PROBABLE FUNCTION</scope>
    <scope>SUBCELLULAR LOCATION</scope>
    <scope>MASS SPECTROMETRY</scope>
    <source>
        <tissue evidence="2">Skin secretion</tissue>
    </source>
</reference>
<sequence length="24" mass="2561">FLPAVLRVAAQVVPTVFCAISKKC</sequence>
<comment type="function">
    <text evidence="2 4">Has antibacterial activity against E.coli and S.aureus strains. Has antifungal activity against C.albicans. Has hemolytic activity against rabbit erythrocytes (Probable).</text>
</comment>
<comment type="subcellular location">
    <subcellularLocation>
        <location evidence="5">Secreted</location>
    </subcellularLocation>
</comment>
<comment type="tissue specificity">
    <text evidence="5">Expressed by the skin glands.</text>
</comment>
<comment type="mass spectrometry" mass="2558.4375" error="0.001" method="Electrospray" evidence="2"/>
<comment type="similarity">
    <text evidence="1">Belongs to the frog skin active peptide (FSAP) family. Brevinin subfamily.</text>
</comment>
<accession>B3A0M5</accession>
<organism>
    <name type="scientific">Odorrana jingdongensis</name>
    <name type="common">Jingdong frog</name>
    <name type="synonym">Rana jingdongensis</name>
    <dbReference type="NCBI Taxonomy" id="431936"/>
    <lineage>
        <taxon>Eukaryota</taxon>
        <taxon>Metazoa</taxon>
        <taxon>Chordata</taxon>
        <taxon>Craniata</taxon>
        <taxon>Vertebrata</taxon>
        <taxon>Euteleostomi</taxon>
        <taxon>Amphibia</taxon>
        <taxon>Batrachia</taxon>
        <taxon>Anura</taxon>
        <taxon>Neobatrachia</taxon>
        <taxon>Ranoidea</taxon>
        <taxon>Ranidae</taxon>
        <taxon>Odorrana</taxon>
    </lineage>
</organism>
<protein>
    <recommendedName>
        <fullName evidence="3">Brevinin-1JDb</fullName>
    </recommendedName>
</protein>
<dbReference type="GO" id="GO:0005576">
    <property type="term" value="C:extracellular region"/>
    <property type="evidence" value="ECO:0007669"/>
    <property type="project" value="UniProtKB-SubCell"/>
</dbReference>
<dbReference type="GO" id="GO:0042742">
    <property type="term" value="P:defense response to bacterium"/>
    <property type="evidence" value="ECO:0007669"/>
    <property type="project" value="UniProtKB-KW"/>
</dbReference>
<dbReference type="GO" id="GO:0050832">
    <property type="term" value="P:defense response to fungus"/>
    <property type="evidence" value="ECO:0007669"/>
    <property type="project" value="UniProtKB-KW"/>
</dbReference>
<dbReference type="GO" id="GO:0031640">
    <property type="term" value="P:killing of cells of another organism"/>
    <property type="evidence" value="ECO:0007669"/>
    <property type="project" value="UniProtKB-KW"/>
</dbReference>
<dbReference type="InterPro" id="IPR012520">
    <property type="entry name" value="Antimicrobial_frog_1"/>
</dbReference>
<dbReference type="Pfam" id="PF08018">
    <property type="entry name" value="Antimicrobial_1"/>
    <property type="match status" value="1"/>
</dbReference>
<feature type="peptide" id="PRO_0000420132" description="Brevinin-1JDb" evidence="2">
    <location>
        <begin position="1"/>
        <end position="24"/>
    </location>
</feature>
<feature type="disulfide bond" evidence="2">
    <location>
        <begin position="18"/>
        <end position="24"/>
    </location>
</feature>
<feature type="unsure residue" description="L or I" evidence="2">
    <location>
        <position position="2"/>
    </location>
</feature>
<feature type="unsure residue" description="L or I" evidence="2">
    <location>
        <position position="6"/>
    </location>
</feature>
<feature type="unsure residue" description="I or L" evidence="2">
    <location>
        <position position="20"/>
    </location>
</feature>
<keyword id="KW-0878">Amphibian defense peptide</keyword>
<keyword id="KW-0044">Antibiotic</keyword>
<keyword id="KW-0929">Antimicrobial</keyword>
<keyword id="KW-0204">Cytolysis</keyword>
<keyword id="KW-0903">Direct protein sequencing</keyword>
<keyword id="KW-1015">Disulfide bond</keyword>
<keyword id="KW-0295">Fungicide</keyword>
<keyword id="KW-0354">Hemolysis</keyword>
<keyword id="KW-0964">Secreted</keyword>
<proteinExistence type="evidence at protein level"/>
<name>BR1B_ODOJI</name>